<gene>
    <name evidence="1" type="primary">plsX</name>
    <name type="ordered locus">ECH74115_1469</name>
</gene>
<dbReference type="EC" id="2.3.1.274" evidence="1"/>
<dbReference type="EMBL" id="CP001164">
    <property type="protein sequence ID" value="ACI36090.1"/>
    <property type="molecule type" value="Genomic_DNA"/>
</dbReference>
<dbReference type="RefSeq" id="WP_000197578.1">
    <property type="nucleotide sequence ID" value="NC_011353.1"/>
</dbReference>
<dbReference type="SMR" id="B5YVV8"/>
<dbReference type="GeneID" id="93776318"/>
<dbReference type="KEGG" id="ecf:ECH74115_1469"/>
<dbReference type="HOGENOM" id="CLU_039379_1_0_6"/>
<dbReference type="UniPathway" id="UPA00085"/>
<dbReference type="GO" id="GO:0005737">
    <property type="term" value="C:cytoplasm"/>
    <property type="evidence" value="ECO:0007669"/>
    <property type="project" value="UniProtKB-SubCell"/>
</dbReference>
<dbReference type="GO" id="GO:0043811">
    <property type="term" value="F:phosphate:acyl-[acyl carrier protein] acyltransferase activity"/>
    <property type="evidence" value="ECO:0007669"/>
    <property type="project" value="UniProtKB-UniRule"/>
</dbReference>
<dbReference type="GO" id="GO:0006633">
    <property type="term" value="P:fatty acid biosynthetic process"/>
    <property type="evidence" value="ECO:0007669"/>
    <property type="project" value="UniProtKB-UniRule"/>
</dbReference>
<dbReference type="GO" id="GO:0008654">
    <property type="term" value="P:phospholipid biosynthetic process"/>
    <property type="evidence" value="ECO:0007669"/>
    <property type="project" value="UniProtKB-KW"/>
</dbReference>
<dbReference type="FunFam" id="3.40.718.10:FF:000008">
    <property type="entry name" value="Phosphate acyltransferase"/>
    <property type="match status" value="1"/>
</dbReference>
<dbReference type="Gene3D" id="3.40.718.10">
    <property type="entry name" value="Isopropylmalate Dehydrogenase"/>
    <property type="match status" value="1"/>
</dbReference>
<dbReference type="HAMAP" id="MF_00019">
    <property type="entry name" value="PlsX"/>
    <property type="match status" value="1"/>
</dbReference>
<dbReference type="InterPro" id="IPR003664">
    <property type="entry name" value="FA_synthesis"/>
</dbReference>
<dbReference type="InterPro" id="IPR012281">
    <property type="entry name" value="Phospholipid_synth_PlsX-like"/>
</dbReference>
<dbReference type="NCBIfam" id="TIGR00182">
    <property type="entry name" value="plsX"/>
    <property type="match status" value="1"/>
</dbReference>
<dbReference type="PANTHER" id="PTHR30100">
    <property type="entry name" value="FATTY ACID/PHOSPHOLIPID SYNTHESIS PROTEIN PLSX"/>
    <property type="match status" value="1"/>
</dbReference>
<dbReference type="PANTHER" id="PTHR30100:SF1">
    <property type="entry name" value="PHOSPHATE ACYLTRANSFERASE"/>
    <property type="match status" value="1"/>
</dbReference>
<dbReference type="Pfam" id="PF02504">
    <property type="entry name" value="FA_synthesis"/>
    <property type="match status" value="1"/>
</dbReference>
<dbReference type="PIRSF" id="PIRSF002465">
    <property type="entry name" value="Phsphlp_syn_PlsX"/>
    <property type="match status" value="1"/>
</dbReference>
<dbReference type="SUPFAM" id="SSF53659">
    <property type="entry name" value="Isocitrate/Isopropylmalate dehydrogenase-like"/>
    <property type="match status" value="1"/>
</dbReference>
<proteinExistence type="inferred from homology"/>
<reference key="1">
    <citation type="journal article" date="2011" name="Proc. Natl. Acad. Sci. U.S.A.">
        <title>Genomic anatomy of Escherichia coli O157:H7 outbreaks.</title>
        <authorList>
            <person name="Eppinger M."/>
            <person name="Mammel M.K."/>
            <person name="Leclerc J.E."/>
            <person name="Ravel J."/>
            <person name="Cebula T.A."/>
        </authorList>
    </citation>
    <scope>NUCLEOTIDE SEQUENCE [LARGE SCALE GENOMIC DNA]</scope>
    <source>
        <strain>EC4115 / EHEC</strain>
    </source>
</reference>
<sequence length="356" mass="38224">MTRLTLALDVMGGDFGPSVTVPAALQALNSNSQLTLLLVGNPDAITPLLAKADFEQRSRLQIIPAQSVIASDARPSQAIRASRGSSMRVALELVKEGRAQACVSAGNTGALMGLAKLLLKPLEGIERPALVTVLPHQQKGKTVVLDLGANVDCDSTMLVQFAIMGSVLAEEVVEIPNPRVALLNIGEEEVKGLDSIRDASAVLKTIPSINYIGYLEANELLTGKTDVLVCDGFTGNVTLKTMEGVVRMFLSLLKSQGEGKKRSWWLLLLKRWLQKSLTRRFSHLNPDQYNGACLLGLRGTVIKSHGAANQRAFAVAIEQAVQAVQRQVPQRIAARLESVYPAGFELLDGGKSGTLR</sequence>
<evidence type="ECO:0000255" key="1">
    <source>
        <dbReference type="HAMAP-Rule" id="MF_00019"/>
    </source>
</evidence>
<organism>
    <name type="scientific">Escherichia coli O157:H7 (strain EC4115 / EHEC)</name>
    <dbReference type="NCBI Taxonomy" id="444450"/>
    <lineage>
        <taxon>Bacteria</taxon>
        <taxon>Pseudomonadati</taxon>
        <taxon>Pseudomonadota</taxon>
        <taxon>Gammaproteobacteria</taxon>
        <taxon>Enterobacterales</taxon>
        <taxon>Enterobacteriaceae</taxon>
        <taxon>Escherichia</taxon>
    </lineage>
</organism>
<comment type="function">
    <text evidence="1">Catalyzes the reversible formation of acyl-phosphate (acyl-PO(4)) from acyl-[acyl-carrier-protein] (acyl-ACP). This enzyme utilizes acyl-ACP as fatty acyl donor, but not acyl-CoA.</text>
</comment>
<comment type="catalytic activity">
    <reaction evidence="1">
        <text>a fatty acyl-[ACP] + phosphate = an acyl phosphate + holo-[ACP]</text>
        <dbReference type="Rhea" id="RHEA:42292"/>
        <dbReference type="Rhea" id="RHEA-COMP:9685"/>
        <dbReference type="Rhea" id="RHEA-COMP:14125"/>
        <dbReference type="ChEBI" id="CHEBI:43474"/>
        <dbReference type="ChEBI" id="CHEBI:59918"/>
        <dbReference type="ChEBI" id="CHEBI:64479"/>
        <dbReference type="ChEBI" id="CHEBI:138651"/>
        <dbReference type="EC" id="2.3.1.274"/>
    </reaction>
</comment>
<comment type="pathway">
    <text evidence="1">Lipid metabolism; phospholipid metabolism.</text>
</comment>
<comment type="subunit">
    <text evidence="1">Homodimer. Probably interacts with PlsY.</text>
</comment>
<comment type="subcellular location">
    <subcellularLocation>
        <location evidence="1">Cytoplasm</location>
    </subcellularLocation>
    <text evidence="1">Associated with the membrane possibly through PlsY.</text>
</comment>
<comment type="similarity">
    <text evidence="1">Belongs to the PlsX family.</text>
</comment>
<protein>
    <recommendedName>
        <fullName evidence="1">Phosphate acyltransferase</fullName>
        <ecNumber evidence="1">2.3.1.274</ecNumber>
    </recommendedName>
    <alternativeName>
        <fullName evidence="1">Acyl-ACP phosphotransacylase</fullName>
    </alternativeName>
    <alternativeName>
        <fullName evidence="1">Acyl-[acyl-carrier-protein]--phosphate acyltransferase</fullName>
    </alternativeName>
    <alternativeName>
        <fullName evidence="1">Phosphate-acyl-ACP acyltransferase</fullName>
    </alternativeName>
</protein>
<name>PLSX_ECO5E</name>
<accession>B5YVV8</accession>
<keyword id="KW-0963">Cytoplasm</keyword>
<keyword id="KW-0444">Lipid biosynthesis</keyword>
<keyword id="KW-0443">Lipid metabolism</keyword>
<keyword id="KW-0594">Phospholipid biosynthesis</keyword>
<keyword id="KW-1208">Phospholipid metabolism</keyword>
<keyword id="KW-0808">Transferase</keyword>
<feature type="chain" id="PRO_1000089902" description="Phosphate acyltransferase">
    <location>
        <begin position="1"/>
        <end position="356"/>
    </location>
</feature>